<keyword id="KW-0488">Methylation</keyword>
<keyword id="KW-0687">Ribonucleoprotein</keyword>
<keyword id="KW-0689">Ribosomal protein</keyword>
<keyword id="KW-0694">RNA-binding</keyword>
<keyword id="KW-0699">rRNA-binding</keyword>
<evidence type="ECO:0000255" key="1">
    <source>
        <dbReference type="HAMAP-Rule" id="MF_00736"/>
    </source>
</evidence>
<evidence type="ECO:0000305" key="2"/>
<feature type="chain" id="PRO_1000046155" description="Large ribosomal subunit protein uL11">
    <location>
        <begin position="1"/>
        <end position="143"/>
    </location>
</feature>
<reference key="1">
    <citation type="journal article" date="2010" name="Genome Biol. Evol.">
        <title>Continuing evolution of Burkholderia mallei through genome reduction and large-scale rearrangements.</title>
        <authorList>
            <person name="Losada L."/>
            <person name="Ronning C.M."/>
            <person name="DeShazer D."/>
            <person name="Woods D."/>
            <person name="Fedorova N."/>
            <person name="Kim H.S."/>
            <person name="Shabalina S.A."/>
            <person name="Pearson T.R."/>
            <person name="Brinkac L."/>
            <person name="Tan P."/>
            <person name="Nandi T."/>
            <person name="Crabtree J."/>
            <person name="Badger J."/>
            <person name="Beckstrom-Sternberg S."/>
            <person name="Saqib M."/>
            <person name="Schutzer S.E."/>
            <person name="Keim P."/>
            <person name="Nierman W.C."/>
        </authorList>
    </citation>
    <scope>NUCLEOTIDE SEQUENCE [LARGE SCALE GENOMIC DNA]</scope>
    <source>
        <strain>668</strain>
    </source>
</reference>
<proteinExistence type="inferred from homology"/>
<protein>
    <recommendedName>
        <fullName evidence="1">Large ribosomal subunit protein uL11</fullName>
    </recommendedName>
    <alternativeName>
        <fullName evidence="2">50S ribosomal protein L11</fullName>
    </alternativeName>
</protein>
<gene>
    <name evidence="1" type="primary">rplK</name>
    <name type="ordered locus">BURPS668_3758</name>
</gene>
<comment type="function">
    <text evidence="1">Forms part of the ribosomal stalk which helps the ribosome interact with GTP-bound translation factors.</text>
</comment>
<comment type="subunit">
    <text evidence="1">Part of the ribosomal stalk of the 50S ribosomal subunit. Interacts with L10 and the large rRNA to form the base of the stalk. L10 forms an elongated spine to which L12 dimers bind in a sequential fashion forming a multimeric L10(L12)X complex.</text>
</comment>
<comment type="PTM">
    <text evidence="1">One or more lysine residues are methylated.</text>
</comment>
<comment type="similarity">
    <text evidence="1">Belongs to the universal ribosomal protein uL11 family.</text>
</comment>
<organism>
    <name type="scientific">Burkholderia pseudomallei (strain 668)</name>
    <dbReference type="NCBI Taxonomy" id="320373"/>
    <lineage>
        <taxon>Bacteria</taxon>
        <taxon>Pseudomonadati</taxon>
        <taxon>Pseudomonadota</taxon>
        <taxon>Betaproteobacteria</taxon>
        <taxon>Burkholderiales</taxon>
        <taxon>Burkholderiaceae</taxon>
        <taxon>Burkholderia</taxon>
        <taxon>pseudomallei group</taxon>
    </lineage>
</organism>
<sequence>MAKKIVGFIKLQIPAGKANPSPPVGPALGQRGLNIMEFCKAFNAQTQGMEPGLPVPVVITAYADKSFTFVMKTPPATVLIKKAAKVDKGSSKPHTDKVGKITRAQAEEIAKTKMPDLTAADLDAAVRTIAGSARSMGITVEGV</sequence>
<name>RL11_BURP6</name>
<dbReference type="EMBL" id="CP000570">
    <property type="protein sequence ID" value="ABN84946.1"/>
    <property type="molecule type" value="Genomic_DNA"/>
</dbReference>
<dbReference type="RefSeq" id="WP_004198368.1">
    <property type="nucleotide sequence ID" value="NC_009074.1"/>
</dbReference>
<dbReference type="SMR" id="A3NEJ1"/>
<dbReference type="GeneID" id="93061845"/>
<dbReference type="KEGG" id="bpd:BURPS668_3758"/>
<dbReference type="HOGENOM" id="CLU_074237_2_0_4"/>
<dbReference type="GO" id="GO:0022625">
    <property type="term" value="C:cytosolic large ribosomal subunit"/>
    <property type="evidence" value="ECO:0007669"/>
    <property type="project" value="TreeGrafter"/>
</dbReference>
<dbReference type="GO" id="GO:0070180">
    <property type="term" value="F:large ribosomal subunit rRNA binding"/>
    <property type="evidence" value="ECO:0007669"/>
    <property type="project" value="UniProtKB-UniRule"/>
</dbReference>
<dbReference type="GO" id="GO:0003735">
    <property type="term" value="F:structural constituent of ribosome"/>
    <property type="evidence" value="ECO:0007669"/>
    <property type="project" value="InterPro"/>
</dbReference>
<dbReference type="GO" id="GO:0006412">
    <property type="term" value="P:translation"/>
    <property type="evidence" value="ECO:0007669"/>
    <property type="project" value="UniProtKB-UniRule"/>
</dbReference>
<dbReference type="CDD" id="cd00349">
    <property type="entry name" value="Ribosomal_L11"/>
    <property type="match status" value="1"/>
</dbReference>
<dbReference type="FunFam" id="1.10.10.250:FF:000001">
    <property type="entry name" value="50S ribosomal protein L11"/>
    <property type="match status" value="1"/>
</dbReference>
<dbReference type="FunFam" id="3.30.1550.10:FF:000001">
    <property type="entry name" value="50S ribosomal protein L11"/>
    <property type="match status" value="1"/>
</dbReference>
<dbReference type="Gene3D" id="1.10.10.250">
    <property type="entry name" value="Ribosomal protein L11, C-terminal domain"/>
    <property type="match status" value="1"/>
</dbReference>
<dbReference type="Gene3D" id="3.30.1550.10">
    <property type="entry name" value="Ribosomal protein L11/L12, N-terminal domain"/>
    <property type="match status" value="1"/>
</dbReference>
<dbReference type="HAMAP" id="MF_00736">
    <property type="entry name" value="Ribosomal_uL11"/>
    <property type="match status" value="1"/>
</dbReference>
<dbReference type="InterPro" id="IPR000911">
    <property type="entry name" value="Ribosomal_uL11"/>
</dbReference>
<dbReference type="InterPro" id="IPR006519">
    <property type="entry name" value="Ribosomal_uL11_bac-typ"/>
</dbReference>
<dbReference type="InterPro" id="IPR020783">
    <property type="entry name" value="Ribosomal_uL11_C"/>
</dbReference>
<dbReference type="InterPro" id="IPR036769">
    <property type="entry name" value="Ribosomal_uL11_C_sf"/>
</dbReference>
<dbReference type="InterPro" id="IPR020785">
    <property type="entry name" value="Ribosomal_uL11_CS"/>
</dbReference>
<dbReference type="InterPro" id="IPR020784">
    <property type="entry name" value="Ribosomal_uL11_N"/>
</dbReference>
<dbReference type="InterPro" id="IPR036796">
    <property type="entry name" value="Ribosomal_uL11_N_sf"/>
</dbReference>
<dbReference type="NCBIfam" id="TIGR01632">
    <property type="entry name" value="L11_bact"/>
    <property type="match status" value="1"/>
</dbReference>
<dbReference type="PANTHER" id="PTHR11661">
    <property type="entry name" value="60S RIBOSOMAL PROTEIN L12"/>
    <property type="match status" value="1"/>
</dbReference>
<dbReference type="PANTHER" id="PTHR11661:SF1">
    <property type="entry name" value="LARGE RIBOSOMAL SUBUNIT PROTEIN UL11M"/>
    <property type="match status" value="1"/>
</dbReference>
<dbReference type="Pfam" id="PF00298">
    <property type="entry name" value="Ribosomal_L11"/>
    <property type="match status" value="1"/>
</dbReference>
<dbReference type="Pfam" id="PF03946">
    <property type="entry name" value="Ribosomal_L11_N"/>
    <property type="match status" value="1"/>
</dbReference>
<dbReference type="SMART" id="SM00649">
    <property type="entry name" value="RL11"/>
    <property type="match status" value="1"/>
</dbReference>
<dbReference type="SUPFAM" id="SSF54747">
    <property type="entry name" value="Ribosomal L11/L12e N-terminal domain"/>
    <property type="match status" value="1"/>
</dbReference>
<dbReference type="SUPFAM" id="SSF46906">
    <property type="entry name" value="Ribosomal protein L11, C-terminal domain"/>
    <property type="match status" value="1"/>
</dbReference>
<dbReference type="PROSITE" id="PS00359">
    <property type="entry name" value="RIBOSOMAL_L11"/>
    <property type="match status" value="1"/>
</dbReference>
<accession>A3NEJ1</accession>